<reference key="1">
    <citation type="journal article" date="1993" name="J. Biol. Chem.">
        <title>Molecular cloning of a chloride channel that is regulated by dehydration and expressed predominantly in kidney medulla.</title>
        <authorList>
            <person name="Uchida S."/>
            <person name="Sasaki S."/>
            <person name="Furukawa T."/>
            <person name="Hiraoka M."/>
            <person name="Imai T."/>
            <person name="Hirata Y."/>
            <person name="Marumo F."/>
        </authorList>
    </citation>
    <scope>NUCLEOTIDE SEQUENCE [MRNA]</scope>
    <scope>FUNCTION</scope>
    <scope>TRANSPORTER ACTIVITY</scope>
    <source>
        <tissue>Kidney</tissue>
    </source>
</reference>
<reference key="2">
    <citation type="journal article" date="1994" name="J. Biol. Chem.">
        <title>Molecular cloning of a chloride channel that is regulated by dehydration and expressed predominantly in kidney medulla.</title>
        <authorList>
            <person name="Uchida S."/>
            <person name="Sasaki S."/>
            <person name="Furukawa T."/>
            <person name="Hiraoka M."/>
            <person name="Imai T."/>
            <person name="Hirata Y."/>
            <person name="Marumo F."/>
        </authorList>
    </citation>
    <scope>SEQUENCE REVISION</scope>
    <source>
        <strain>Sprague-Dawley</strain>
        <tissue>Kidney</tissue>
    </source>
</reference>
<reference key="3">
    <citation type="submission" date="1996-12" db="EMBL/GenBank/DDBJ databases">
        <authorList>
            <person name="Uchida S."/>
        </authorList>
    </citation>
    <scope>SEQUENCE REVISION</scope>
    <source>
        <strain>Sprague-Dawley</strain>
        <tissue>Kidney</tissue>
    </source>
</reference>
<reference key="4">
    <citation type="journal article" date="1994" name="Proc. Natl. Acad. Sci. U.S.A.">
        <title>Two highly homologous members of the ClC chloride channel family in both rat and human kidney.</title>
        <authorList>
            <person name="Kieferle S."/>
            <person name="Fong P."/>
            <person name="Bens M."/>
            <person name="Vandewalle A."/>
            <person name="Jentsch T."/>
        </authorList>
    </citation>
    <scope>NUCLEOTIDE SEQUENCE [MRNA]</scope>
    <scope>TISSUE SPECIFICITY</scope>
    <source>
        <tissue>Kidney</tissue>
    </source>
</reference>
<reference key="5">
    <citation type="journal article" date="2002" name="Pflugers Arch.">
        <title>Barttin increases surface expression and changes current properties of ClC-K channels.</title>
        <authorList>
            <person name="Waldegger S."/>
            <person name="Jeck N."/>
            <person name="Barth P."/>
            <person name="Peters M."/>
            <person name="Vitzthum H."/>
            <person name="Wolf K."/>
            <person name="Kurtz A."/>
            <person name="Konrad M."/>
            <person name="Seyberth H.W."/>
        </authorList>
    </citation>
    <scope>FUNCTION</scope>
    <scope>ACTIVITY REGULATION</scope>
    <scope>INTERACTION WITH BSND</scope>
</reference>
<reference key="6">
    <citation type="journal article" date="2003" name="Pflugers Arch.">
        <title>Parallel down-regulation of chloride channel CLC-K1 and barttin mRNA in the thin ascending limb of the rat nephron by furosemide.</title>
        <authorList>
            <person name="Wolf K."/>
            <person name="Meier-Meitinger M."/>
            <person name="Bergler T."/>
            <person name="Castrop H."/>
            <person name="Vitzthum H."/>
            <person name="Riegger G.A.J."/>
            <person name="Kurtz A."/>
            <person name="Kraemer B.K."/>
        </authorList>
    </citation>
    <scope>DOWN-REGULATION BY FUROSEMIDE</scope>
</reference>
<reference key="7">
    <citation type="journal article" date="2006" name="Proc. Natl. Acad. Sci. U.S.A.">
        <title>Barttin modulates trafficking and function of ClC-K channels.</title>
        <authorList>
            <person name="Scholl U."/>
            <person name="Hebeisen S."/>
            <person name="Janssen A.G."/>
            <person name="Mueller-Newen G."/>
            <person name="Alekov A."/>
            <person name="Fahlke C."/>
        </authorList>
    </citation>
    <scope>FUNCTION</scope>
    <scope>MUTAGENESIS OF VAL-166</scope>
</reference>
<reference key="8">
    <citation type="journal article" date="2010" name="J. Am. Soc. Nephrol.">
        <title>Barttin activates ClC-K channel function by modulating gating.</title>
        <authorList>
            <person name="Fischer M."/>
            <person name="Janssen A.G."/>
            <person name="Fahlke C."/>
        </authorList>
    </citation>
    <scope>FUNCTION</scope>
    <scope>MUTAGENESIS OF VAL-166</scope>
</reference>
<feature type="chain" id="PRO_0000094458" description="Chloride channel protein ClC-Ka">
    <location>
        <begin position="1"/>
        <end position="687"/>
    </location>
</feature>
<feature type="transmembrane region" description="Helical" evidence="3">
    <location>
        <begin position="52"/>
        <end position="72"/>
    </location>
</feature>
<feature type="transmembrane region" description="Helical" evidence="3">
    <location>
        <begin position="94"/>
        <end position="114"/>
    </location>
</feature>
<feature type="transmembrane region" description="Helical" evidence="3">
    <location>
        <begin position="161"/>
        <end position="181"/>
    </location>
</feature>
<feature type="transmembrane region" description="Helical" evidence="3">
    <location>
        <begin position="204"/>
        <end position="224"/>
    </location>
</feature>
<feature type="transmembrane region" description="Helical" evidence="3">
    <location>
        <begin position="236"/>
        <end position="256"/>
    </location>
</feature>
<feature type="transmembrane region" description="Helical" evidence="3">
    <location>
        <begin position="282"/>
        <end position="302"/>
    </location>
</feature>
<feature type="transmembrane region" description="Helical" evidence="3">
    <location>
        <begin position="325"/>
        <end position="345"/>
    </location>
</feature>
<feature type="transmembrane region" description="Helical" evidence="3">
    <location>
        <begin position="396"/>
        <end position="416"/>
    </location>
</feature>
<feature type="transmembrane region" description="Helical" evidence="3">
    <location>
        <begin position="417"/>
        <end position="437"/>
    </location>
</feature>
<feature type="transmembrane region" description="Helical" evidence="3">
    <location>
        <begin position="458"/>
        <end position="478"/>
    </location>
</feature>
<feature type="transmembrane region" description="Helical" evidence="3">
    <location>
        <begin position="486"/>
        <end position="506"/>
    </location>
</feature>
<feature type="topological domain" description="Cytoplasmic" evidence="3">
    <location>
        <begin position="507"/>
        <end position="687"/>
    </location>
</feature>
<feature type="domain" description="CBS 1" evidence="4">
    <location>
        <begin position="551"/>
        <end position="609"/>
    </location>
</feature>
<feature type="domain" description="CBS 2" evidence="4">
    <location>
        <begin position="626"/>
        <end position="687"/>
    </location>
</feature>
<feature type="binding site" evidence="1">
    <location>
        <position position="259"/>
    </location>
    <ligand>
        <name>Ca(2+)</name>
        <dbReference type="ChEBI" id="CHEBI:29108"/>
    </ligand>
</feature>
<feature type="binding site" evidence="1">
    <location>
        <position position="261"/>
    </location>
    <ligand>
        <name>Ca(2+)</name>
        <dbReference type="ChEBI" id="CHEBI:29108"/>
    </ligand>
</feature>
<feature type="binding site" evidence="1">
    <location>
        <position position="278"/>
    </location>
    <ligand>
        <name>Ca(2+)</name>
        <dbReference type="ChEBI" id="CHEBI:29108"/>
    </ligand>
</feature>
<feature type="binding site" evidence="1">
    <location>
        <position position="281"/>
    </location>
    <ligand>
        <name>Ca(2+)</name>
        <dbReference type="ChEBI" id="CHEBI:29108"/>
    </ligand>
</feature>
<feature type="mutagenesis site" description="Inverts the voltage dependence of channel gating, with fast protopore gating upon membrane depolarization and slow common gating upon hyperpolarization; activated upon hyperpolarization when coexpressed with BSND/Barttin." evidence="7 8">
    <original>V</original>
    <variation>E</variation>
    <location>
        <position position="166"/>
    </location>
</feature>
<feature type="sequence conflict" description="In Ref. 4; CAA84064." evidence="11" ref="4">
    <original>I</original>
    <variation>V</variation>
    <location>
        <position position="266"/>
    </location>
</feature>
<feature type="sequence conflict" description="In Ref. 4; CAA84064." evidence="11" ref="4">
    <original>W</original>
    <variation>R</variation>
    <location>
        <position position="534"/>
    </location>
</feature>
<feature type="sequence conflict" description="In Ref. 4; CAA84064." evidence="11" ref="4">
    <original>AS</original>
    <variation>TP</variation>
    <location>
        <begin position="608"/>
        <end position="609"/>
    </location>
</feature>
<sequence>MEELVGLREGSSGKPVTLQELWGPCPRIRRGVRRGLEWLKERLFRVGEDWHFLVALGVLMALISYAMNFAIGRVVRAHKWLYREVGDGHLLRYLSWTVYPVALLSFSSGFSQSISPFSGGSGLPELKTMLSGVVLEDYLDIKNFGAKVVGLSCTLATGSTIFLGKVGPFVHLSVMISAYLGRVRAKTIGETENKAKEIEMLSAAAAVGVATVFAAPFSGVLFSIEVMSSHFSVWNYWRGFFAATCGAFMFRLLGVFNSEQETITSIYKTRFRVDVPFDLPEIFFFVALGFICGVLSCAYLFCQRTFLRFIKTNRYTSRLLATSKPSYAALVALVLASITYPPGVGRFMASRLSMAEHLHSLFDNNSWALMTRNSSPPWPAEPDPQNLWLEWCHPRFTIFGTLAFFLVMKFWMLILATTIPMPAGYFMPIFIIGAAIGRLLGEALSVAFPEGIVAGREVNPIMPGGYALAGAAAFSGAVTHTISTALLAFELTGQIVHALPVLMAVLAANAISQNCQPSFYDGTIMAKKLPYLPWIRGRQIGSYPVTVEHFMNCNLTTLAKDTPLEEVVKVVTSTEVSQYPLVETRESQTLVGIVERTHLVQALQTQPASWAPGQERFLQDILAGGCPTQPVTLQLSPETSLYQAHSLFERLTLQSLFVTSRGKAVGSVSWAELKKAISTLINPPAPK</sequence>
<name>CLCKA_RAT</name>
<organism>
    <name type="scientific">Rattus norvegicus</name>
    <name type="common">Rat</name>
    <dbReference type="NCBI Taxonomy" id="10116"/>
    <lineage>
        <taxon>Eukaryota</taxon>
        <taxon>Metazoa</taxon>
        <taxon>Chordata</taxon>
        <taxon>Craniata</taxon>
        <taxon>Vertebrata</taxon>
        <taxon>Euteleostomi</taxon>
        <taxon>Mammalia</taxon>
        <taxon>Eutheria</taxon>
        <taxon>Euarchontoglires</taxon>
        <taxon>Glires</taxon>
        <taxon>Rodentia</taxon>
        <taxon>Myomorpha</taxon>
        <taxon>Muroidea</taxon>
        <taxon>Muridae</taxon>
        <taxon>Murinae</taxon>
        <taxon>Rattus</taxon>
    </lineage>
</organism>
<evidence type="ECO:0000250" key="1">
    <source>
        <dbReference type="UniProtKB" id="P51800"/>
    </source>
</evidence>
<evidence type="ECO:0000250" key="2">
    <source>
        <dbReference type="UniProtKB" id="Q9WUB7"/>
    </source>
</evidence>
<evidence type="ECO:0000255" key="3"/>
<evidence type="ECO:0000255" key="4">
    <source>
        <dbReference type="PROSITE-ProRule" id="PRU00703"/>
    </source>
</evidence>
<evidence type="ECO:0000269" key="5">
    <source>
    </source>
</evidence>
<evidence type="ECO:0000269" key="6">
    <source>
    </source>
</evidence>
<evidence type="ECO:0000269" key="7">
    <source>
    </source>
</evidence>
<evidence type="ECO:0000269" key="8">
    <source>
    </source>
</evidence>
<evidence type="ECO:0000269" key="9">
    <source>
    </source>
</evidence>
<evidence type="ECO:0000303" key="10">
    <source>
    </source>
</evidence>
<evidence type="ECO:0000305" key="11"/>
<evidence type="ECO:0000305" key="12">
    <source>
    </source>
</evidence>
<evidence type="ECO:0000312" key="13">
    <source>
        <dbReference type="RGD" id="68435"/>
    </source>
</evidence>
<protein>
    <recommendedName>
        <fullName>Chloride channel protein ClC-Ka</fullName>
        <shortName>Chloride channel Ka</shortName>
    </recommendedName>
    <alternativeName>
        <fullName evidence="10">ClC-K1</fullName>
    </alternativeName>
</protein>
<proteinExistence type="evidence at protein level"/>
<accession>Q06393</accession>
<accession>P97709</accession>
<dbReference type="EMBL" id="D13927">
    <property type="protein sequence ID" value="BAA03026.1"/>
    <property type="molecule type" value="mRNA"/>
</dbReference>
<dbReference type="EMBL" id="Z34291">
    <property type="protein sequence ID" value="CAA84064.1"/>
    <property type="molecule type" value="mRNA"/>
</dbReference>
<dbReference type="PIR" id="A45483">
    <property type="entry name" value="A45483"/>
</dbReference>
<dbReference type="PIR" id="A57713">
    <property type="entry name" value="A57713"/>
</dbReference>
<dbReference type="RefSeq" id="NP_445779.1">
    <property type="nucleotide sequence ID" value="NM_053327.1"/>
</dbReference>
<dbReference type="SMR" id="Q06393"/>
<dbReference type="FunCoup" id="Q06393">
    <property type="interactions" value="5"/>
</dbReference>
<dbReference type="STRING" id="10116.ENSRNOP00000072591"/>
<dbReference type="TCDB" id="2.A.49.2.4">
    <property type="family name" value="the chloride carrier/channel (clc) family"/>
</dbReference>
<dbReference type="PhosphoSitePlus" id="Q06393"/>
<dbReference type="PaxDb" id="10116-ENSRNOP00000013103"/>
<dbReference type="GeneID" id="79425"/>
<dbReference type="KEGG" id="rno:79425"/>
<dbReference type="UCSC" id="RGD:68435">
    <property type="organism name" value="rat"/>
</dbReference>
<dbReference type="AGR" id="RGD:68435"/>
<dbReference type="CTD" id="1187"/>
<dbReference type="RGD" id="68435">
    <property type="gene designation" value="Clcnka"/>
</dbReference>
<dbReference type="eggNOG" id="KOG0476">
    <property type="taxonomic scope" value="Eukaryota"/>
</dbReference>
<dbReference type="InParanoid" id="Q06393"/>
<dbReference type="OrthoDB" id="4564at2759"/>
<dbReference type="PhylomeDB" id="Q06393"/>
<dbReference type="Reactome" id="R-RNO-2672351">
    <property type="pathway name" value="Stimuli-sensing channels"/>
</dbReference>
<dbReference type="PRO" id="PR:Q06393"/>
<dbReference type="Proteomes" id="UP000002494">
    <property type="component" value="Unplaced"/>
</dbReference>
<dbReference type="GO" id="GO:0016324">
    <property type="term" value="C:apical plasma membrane"/>
    <property type="evidence" value="ECO:0000314"/>
    <property type="project" value="RGD"/>
</dbReference>
<dbReference type="GO" id="GO:0016323">
    <property type="term" value="C:basolateral plasma membrane"/>
    <property type="evidence" value="ECO:0000314"/>
    <property type="project" value="RGD"/>
</dbReference>
<dbReference type="GO" id="GO:0034707">
    <property type="term" value="C:chloride channel complex"/>
    <property type="evidence" value="ECO:0007669"/>
    <property type="project" value="UniProtKB-KW"/>
</dbReference>
<dbReference type="GO" id="GO:0005886">
    <property type="term" value="C:plasma membrane"/>
    <property type="evidence" value="ECO:0000318"/>
    <property type="project" value="GO_Central"/>
</dbReference>
<dbReference type="GO" id="GO:0005254">
    <property type="term" value="F:chloride channel activity"/>
    <property type="evidence" value="ECO:0000314"/>
    <property type="project" value="UniProtKB"/>
</dbReference>
<dbReference type="GO" id="GO:0042802">
    <property type="term" value="F:identical protein binding"/>
    <property type="evidence" value="ECO:0000266"/>
    <property type="project" value="RGD"/>
</dbReference>
<dbReference type="GO" id="GO:0046872">
    <property type="term" value="F:metal ion binding"/>
    <property type="evidence" value="ECO:0007669"/>
    <property type="project" value="UniProtKB-KW"/>
</dbReference>
<dbReference type="GO" id="GO:0005247">
    <property type="term" value="F:voltage-gated chloride channel activity"/>
    <property type="evidence" value="ECO:0000318"/>
    <property type="project" value="GO_Central"/>
</dbReference>
<dbReference type="GO" id="GO:0005244">
    <property type="term" value="F:voltage-gated monoatomic ion channel activity"/>
    <property type="evidence" value="ECO:0000314"/>
    <property type="project" value="RGD"/>
</dbReference>
<dbReference type="GO" id="GO:0007589">
    <property type="term" value="P:body fluid secretion"/>
    <property type="evidence" value="ECO:0000270"/>
    <property type="project" value="RGD"/>
</dbReference>
<dbReference type="GO" id="GO:0006821">
    <property type="term" value="P:chloride transport"/>
    <property type="evidence" value="ECO:0000318"/>
    <property type="project" value="GO_Central"/>
</dbReference>
<dbReference type="GO" id="GO:0001822">
    <property type="term" value="P:kidney development"/>
    <property type="evidence" value="ECO:0000270"/>
    <property type="project" value="RGD"/>
</dbReference>
<dbReference type="GO" id="GO:0050878">
    <property type="term" value="P:regulation of body fluid levels"/>
    <property type="evidence" value="ECO:0000266"/>
    <property type="project" value="RGD"/>
</dbReference>
<dbReference type="GO" id="GO:0070293">
    <property type="term" value="P:renal absorption"/>
    <property type="evidence" value="ECO:0000304"/>
    <property type="project" value="UniProtKB"/>
</dbReference>
<dbReference type="GO" id="GO:0072053">
    <property type="term" value="P:renal inner medulla development"/>
    <property type="evidence" value="ECO:0000266"/>
    <property type="project" value="RGD"/>
</dbReference>
<dbReference type="GO" id="GO:0051592">
    <property type="term" value="P:response to calcium ion"/>
    <property type="evidence" value="ECO:0000270"/>
    <property type="project" value="RGD"/>
</dbReference>
<dbReference type="GO" id="GO:0009268">
    <property type="term" value="P:response to pH"/>
    <property type="evidence" value="ECO:0000270"/>
    <property type="project" value="RGD"/>
</dbReference>
<dbReference type="GO" id="GO:0030321">
    <property type="term" value="P:transepithelial chloride transport"/>
    <property type="evidence" value="ECO:0000266"/>
    <property type="project" value="RGD"/>
</dbReference>
<dbReference type="CDD" id="cd04591">
    <property type="entry name" value="CBS_pair_voltage-gated_CLC_euk_bac"/>
    <property type="match status" value="1"/>
</dbReference>
<dbReference type="CDD" id="cd03683">
    <property type="entry name" value="ClC_1_like"/>
    <property type="match status" value="1"/>
</dbReference>
<dbReference type="FunFam" id="1.10.3080.10:FF:000012">
    <property type="entry name" value="Chloride channel K"/>
    <property type="match status" value="1"/>
</dbReference>
<dbReference type="FunFam" id="3.10.580.10:FF:000028">
    <property type="entry name" value="Chloride channel protein"/>
    <property type="match status" value="1"/>
</dbReference>
<dbReference type="Gene3D" id="3.10.580.10">
    <property type="entry name" value="CBS-domain"/>
    <property type="match status" value="1"/>
</dbReference>
<dbReference type="Gene3D" id="1.10.3080.10">
    <property type="entry name" value="Clc chloride channel"/>
    <property type="match status" value="1"/>
</dbReference>
<dbReference type="InterPro" id="IPR000644">
    <property type="entry name" value="CBS_dom"/>
</dbReference>
<dbReference type="InterPro" id="IPR046342">
    <property type="entry name" value="CBS_dom_sf"/>
</dbReference>
<dbReference type="InterPro" id="IPR014743">
    <property type="entry name" value="Cl-channel_core"/>
</dbReference>
<dbReference type="InterPro" id="IPR002250">
    <property type="entry name" value="Cl_channel-K"/>
</dbReference>
<dbReference type="InterPro" id="IPR050970">
    <property type="entry name" value="Cl_channel_volt-gated"/>
</dbReference>
<dbReference type="InterPro" id="IPR001807">
    <property type="entry name" value="ClC"/>
</dbReference>
<dbReference type="PANTHER" id="PTHR45720">
    <property type="entry name" value="CHLORIDE CHANNEL PROTEIN 2"/>
    <property type="match status" value="1"/>
</dbReference>
<dbReference type="PANTHER" id="PTHR45720:SF3">
    <property type="entry name" value="CHLORIDE CHANNEL PROTEIN CLC-KB"/>
    <property type="match status" value="1"/>
</dbReference>
<dbReference type="Pfam" id="PF00571">
    <property type="entry name" value="CBS"/>
    <property type="match status" value="1"/>
</dbReference>
<dbReference type="Pfam" id="PF00654">
    <property type="entry name" value="Voltage_CLC"/>
    <property type="match status" value="1"/>
</dbReference>
<dbReference type="PRINTS" id="PR00762">
    <property type="entry name" value="CLCHANNEL"/>
</dbReference>
<dbReference type="PRINTS" id="PR01119">
    <property type="entry name" value="CLCHANNELKDY"/>
</dbReference>
<dbReference type="SMART" id="SM00116">
    <property type="entry name" value="CBS"/>
    <property type="match status" value="2"/>
</dbReference>
<dbReference type="SUPFAM" id="SSF54631">
    <property type="entry name" value="CBS-domain pair"/>
    <property type="match status" value="1"/>
</dbReference>
<dbReference type="SUPFAM" id="SSF81340">
    <property type="entry name" value="Clc chloride channel"/>
    <property type="match status" value="1"/>
</dbReference>
<dbReference type="PROSITE" id="PS51371">
    <property type="entry name" value="CBS"/>
    <property type="match status" value="2"/>
</dbReference>
<gene>
    <name evidence="13" type="primary">Clcnka</name>
    <name type="synonym">Clcnk1</name>
</gene>
<keyword id="KW-0106">Calcium</keyword>
<keyword id="KW-0129">CBS domain</keyword>
<keyword id="KW-1003">Cell membrane</keyword>
<keyword id="KW-0868">Chloride</keyword>
<keyword id="KW-0869">Chloride channel</keyword>
<keyword id="KW-0407">Ion channel</keyword>
<keyword id="KW-0406">Ion transport</keyword>
<keyword id="KW-0472">Membrane</keyword>
<keyword id="KW-0479">Metal-binding</keyword>
<keyword id="KW-1185">Reference proteome</keyword>
<keyword id="KW-0677">Repeat</keyword>
<keyword id="KW-0812">Transmembrane</keyword>
<keyword id="KW-1133">Transmembrane helix</keyword>
<keyword id="KW-0813">Transport</keyword>
<comment type="function">
    <text evidence="1 2 5 7 8">Anion-selective channel permeable to small monovalent anions with ion selectivity for chloride &gt; bromide &gt; nitrate &gt; iodide (By similarity). Forms a homodimeric channel where each subunit has its own ion conduction pathway. Conducts double-barreled currents controlled by two types of gates, two fast gates that control each subunit independently and a slow common gate that opens and shuts off both subunits simultaneously (PubMed:12111250, PubMed:16849430, PubMed:20538786). Assembles with the regulatory subunit BSND/Barttin for sorting at the basolateral plasma membrane domain. CLCNKA:BSND channels are activated upon membrane hyperpolarization mostly controlled by fast gating (PubMed:12111250, PubMed:16849430, PubMed:20538786). Mediates transepithelial chloride transport from the lumen to interstitial compartment along the thin ascending limb of Henle's loop, contributing to generation of hypertonic medullary interstitium as a countercurrent system to achieve urine concentration (By similarity). Conducts chloride currents in the stria vascularis of the inner ear to establish the endocochlear potential necessary for normal hearing (By similarity).</text>
</comment>
<comment type="catalytic activity">
    <reaction evidence="12">
        <text>chloride(in) = chloride(out)</text>
        <dbReference type="Rhea" id="RHEA:29823"/>
        <dbReference type="ChEBI" id="CHEBI:17996"/>
    </reaction>
</comment>
<comment type="catalytic activity">
    <reaction evidence="12">
        <text>bromide(in) = bromide(out)</text>
        <dbReference type="Rhea" id="RHEA:75383"/>
        <dbReference type="ChEBI" id="CHEBI:15858"/>
    </reaction>
</comment>
<comment type="catalytic activity">
    <reaction evidence="1">
        <text>nitrate(in) = nitrate(out)</text>
        <dbReference type="Rhea" id="RHEA:34923"/>
        <dbReference type="ChEBI" id="CHEBI:17632"/>
    </reaction>
</comment>
<comment type="catalytic activity">
    <reaction evidence="12">
        <text>iodide(out) = iodide(in)</text>
        <dbReference type="Rhea" id="RHEA:66324"/>
        <dbReference type="ChEBI" id="CHEBI:16382"/>
    </reaction>
</comment>
<comment type="activity regulation">
    <text evidence="5">Activated by extracellular Ca(2+) and inhibited by extracellular acidic pH.</text>
</comment>
<comment type="subunit">
    <text evidence="1">Homodimer. Interacts with BSND.</text>
</comment>
<comment type="subcellular location">
    <subcellularLocation>
        <location evidence="2">Basolateral cell membrane</location>
        <topology evidence="3">Multi-pass membrane protein</topology>
    </subcellularLocation>
</comment>
<comment type="tissue specificity">
    <text evidence="9">Expressed predominantly in the kidney. Expressed strongly in the cortical thick ascending limb and the distal convoluted tubule, with minor expression in the S3 segment of the proximal tubule and the cortical collecting tubule.</text>
</comment>
<comment type="induction">
    <text evidence="6">Regulated in parallel with BSND under furosemide treatment. Decreased to half in the inner medulla under furosemide treatment. In the renal cortex and outer medulla levels were weak and did not change. Regulation with BSND in inner medulla is limited to the thin limb; levels in collecting ducts were not affected by furosemide treatment. During furosemide treatment selective down-regulation with BSND in thin limb plays a role in maintaining salt and water homeostasis.</text>
</comment>
<comment type="similarity">
    <text evidence="11">Belongs to the chloride channel (TC 2.A.49) family. CLCNKA subfamily.</text>
</comment>